<name>MURI_ERWT9</name>
<reference key="1">
    <citation type="journal article" date="2008" name="Environ. Microbiol.">
        <title>The genome of Erwinia tasmaniensis strain Et1/99, a non-pathogenic bacterium in the genus Erwinia.</title>
        <authorList>
            <person name="Kube M."/>
            <person name="Migdoll A.M."/>
            <person name="Mueller I."/>
            <person name="Kuhl H."/>
            <person name="Beck A."/>
            <person name="Reinhardt R."/>
            <person name="Geider K."/>
        </authorList>
    </citation>
    <scope>NUCLEOTIDE SEQUENCE [LARGE SCALE GENOMIC DNA]</scope>
    <source>
        <strain>DSM 17950 / CFBP 7177 / CIP 109463 / NCPPB 4357 / Et1/99</strain>
    </source>
</reference>
<sequence>MPMKPLDGETTSTEKLSPVLRPTVLIFDSGVGGLSVYNEIRTLLPDLHYLYAFDNVAFPYGEKSEAFIVERVLDIVTAVTGLYPLALVVIACNSASTVTLPALRARFAFPVVGVVPAIKPAARLTRNGIVGLLATRGTVKRPYTHELVARFAGECKTEMLGSGELVDIAEAKLHGQPVAIEEVRRILQPWLRMAEPPDTVVLGCTHFPLISEELQQVLPQGTRLIDSGAAIARRTVWLLENESPEVLSADDNMALCLEITEQTVQLIPVLQRYGFKTLKKLAL</sequence>
<keyword id="KW-0133">Cell shape</keyword>
<keyword id="KW-0961">Cell wall biogenesis/degradation</keyword>
<keyword id="KW-0413">Isomerase</keyword>
<keyword id="KW-0573">Peptidoglycan synthesis</keyword>
<keyword id="KW-1185">Reference proteome</keyword>
<evidence type="ECO:0000255" key="1">
    <source>
        <dbReference type="HAMAP-Rule" id="MF_00258"/>
    </source>
</evidence>
<protein>
    <recommendedName>
        <fullName evidence="1">Glutamate racemase</fullName>
        <ecNumber evidence="1">5.1.1.3</ecNumber>
    </recommendedName>
</protein>
<comment type="function">
    <text evidence="1">Provides the (R)-glutamate required for cell wall biosynthesis.</text>
</comment>
<comment type="catalytic activity">
    <reaction evidence="1">
        <text>L-glutamate = D-glutamate</text>
        <dbReference type="Rhea" id="RHEA:12813"/>
        <dbReference type="ChEBI" id="CHEBI:29985"/>
        <dbReference type="ChEBI" id="CHEBI:29986"/>
        <dbReference type="EC" id="5.1.1.3"/>
    </reaction>
</comment>
<comment type="pathway">
    <text evidence="1">Cell wall biogenesis; peptidoglycan biosynthesis.</text>
</comment>
<comment type="similarity">
    <text evidence="1">Belongs to the aspartate/glutamate racemases family.</text>
</comment>
<feature type="chain" id="PRO_1000114043" description="Glutamate racemase">
    <location>
        <begin position="1"/>
        <end position="283"/>
    </location>
</feature>
<feature type="active site" description="Proton donor/acceptor" evidence="1">
    <location>
        <position position="92"/>
    </location>
</feature>
<feature type="active site" description="Proton donor/acceptor" evidence="1">
    <location>
        <position position="204"/>
    </location>
</feature>
<feature type="binding site" evidence="1">
    <location>
        <begin position="28"/>
        <end position="29"/>
    </location>
    <ligand>
        <name>substrate</name>
    </ligand>
</feature>
<feature type="binding site" evidence="1">
    <location>
        <begin position="60"/>
        <end position="61"/>
    </location>
    <ligand>
        <name>substrate</name>
    </ligand>
</feature>
<feature type="binding site" evidence="1">
    <location>
        <begin position="93"/>
        <end position="94"/>
    </location>
    <ligand>
        <name>substrate</name>
    </ligand>
</feature>
<feature type="binding site" evidence="1">
    <location>
        <begin position="205"/>
        <end position="206"/>
    </location>
    <ligand>
        <name>substrate</name>
    </ligand>
</feature>
<accession>B2VGA6</accession>
<gene>
    <name evidence="1" type="primary">murI</name>
    <name type="ordered locus">ETA_01440</name>
</gene>
<dbReference type="EC" id="5.1.1.3" evidence="1"/>
<dbReference type="EMBL" id="CU468135">
    <property type="protein sequence ID" value="CAO95190.1"/>
    <property type="molecule type" value="Genomic_DNA"/>
</dbReference>
<dbReference type="RefSeq" id="WP_012439914.1">
    <property type="nucleotide sequence ID" value="NC_010694.1"/>
</dbReference>
<dbReference type="SMR" id="B2VGA6"/>
<dbReference type="STRING" id="465817.ETA_01440"/>
<dbReference type="KEGG" id="eta:ETA_01440"/>
<dbReference type="eggNOG" id="COG0796">
    <property type="taxonomic scope" value="Bacteria"/>
</dbReference>
<dbReference type="HOGENOM" id="CLU_052344_2_0_6"/>
<dbReference type="OrthoDB" id="9801055at2"/>
<dbReference type="UniPathway" id="UPA00219"/>
<dbReference type="Proteomes" id="UP000001726">
    <property type="component" value="Chromosome"/>
</dbReference>
<dbReference type="GO" id="GO:0008881">
    <property type="term" value="F:glutamate racemase activity"/>
    <property type="evidence" value="ECO:0007669"/>
    <property type="project" value="UniProtKB-UniRule"/>
</dbReference>
<dbReference type="GO" id="GO:0071555">
    <property type="term" value="P:cell wall organization"/>
    <property type="evidence" value="ECO:0007669"/>
    <property type="project" value="UniProtKB-KW"/>
</dbReference>
<dbReference type="GO" id="GO:0009252">
    <property type="term" value="P:peptidoglycan biosynthetic process"/>
    <property type="evidence" value="ECO:0007669"/>
    <property type="project" value="UniProtKB-UniRule"/>
</dbReference>
<dbReference type="GO" id="GO:0008360">
    <property type="term" value="P:regulation of cell shape"/>
    <property type="evidence" value="ECO:0007669"/>
    <property type="project" value="UniProtKB-KW"/>
</dbReference>
<dbReference type="FunFam" id="3.40.50.1860:FF:000001">
    <property type="entry name" value="Glutamate racemase"/>
    <property type="match status" value="1"/>
</dbReference>
<dbReference type="Gene3D" id="3.40.50.1860">
    <property type="match status" value="2"/>
</dbReference>
<dbReference type="HAMAP" id="MF_00258">
    <property type="entry name" value="Glu_racemase"/>
    <property type="match status" value="1"/>
</dbReference>
<dbReference type="InterPro" id="IPR015942">
    <property type="entry name" value="Asp/Glu/hydantoin_racemase"/>
</dbReference>
<dbReference type="InterPro" id="IPR001920">
    <property type="entry name" value="Asp/Glu_race"/>
</dbReference>
<dbReference type="InterPro" id="IPR018187">
    <property type="entry name" value="Asp/Glu_racemase_AS_1"/>
</dbReference>
<dbReference type="InterPro" id="IPR033134">
    <property type="entry name" value="Asp/Glu_racemase_AS_2"/>
</dbReference>
<dbReference type="InterPro" id="IPR004391">
    <property type="entry name" value="Glu_race"/>
</dbReference>
<dbReference type="NCBIfam" id="TIGR00067">
    <property type="entry name" value="glut_race"/>
    <property type="match status" value="1"/>
</dbReference>
<dbReference type="NCBIfam" id="NF002034">
    <property type="entry name" value="PRK00865.1-1"/>
    <property type="match status" value="1"/>
</dbReference>
<dbReference type="PANTHER" id="PTHR21198">
    <property type="entry name" value="GLUTAMATE RACEMASE"/>
    <property type="match status" value="1"/>
</dbReference>
<dbReference type="PANTHER" id="PTHR21198:SF2">
    <property type="entry name" value="GLUTAMATE RACEMASE"/>
    <property type="match status" value="1"/>
</dbReference>
<dbReference type="Pfam" id="PF01177">
    <property type="entry name" value="Asp_Glu_race"/>
    <property type="match status" value="1"/>
</dbReference>
<dbReference type="SUPFAM" id="SSF53681">
    <property type="entry name" value="Aspartate/glutamate racemase"/>
    <property type="match status" value="2"/>
</dbReference>
<dbReference type="PROSITE" id="PS00923">
    <property type="entry name" value="ASP_GLU_RACEMASE_1"/>
    <property type="match status" value="1"/>
</dbReference>
<dbReference type="PROSITE" id="PS00924">
    <property type="entry name" value="ASP_GLU_RACEMASE_2"/>
    <property type="match status" value="1"/>
</dbReference>
<organism>
    <name type="scientific">Erwinia tasmaniensis (strain DSM 17950 / CFBP 7177 / CIP 109463 / NCPPB 4357 / Et1/99)</name>
    <dbReference type="NCBI Taxonomy" id="465817"/>
    <lineage>
        <taxon>Bacteria</taxon>
        <taxon>Pseudomonadati</taxon>
        <taxon>Pseudomonadota</taxon>
        <taxon>Gammaproteobacteria</taxon>
        <taxon>Enterobacterales</taxon>
        <taxon>Erwiniaceae</taxon>
        <taxon>Erwinia</taxon>
    </lineage>
</organism>
<proteinExistence type="inferred from homology"/>